<organism>
    <name type="scientific">Desulfomicrobium baculatum</name>
    <name type="common">Desulfovibrio baculatus</name>
    <dbReference type="NCBI Taxonomy" id="899"/>
    <lineage>
        <taxon>Bacteria</taxon>
        <taxon>Pseudomonadati</taxon>
        <taxon>Thermodesulfobacteriota</taxon>
        <taxon>Desulfovibrionia</taxon>
        <taxon>Desulfovibrionales</taxon>
        <taxon>Desulfomicrobiaceae</taxon>
        <taxon>Desulfomicrobium</taxon>
    </lineage>
</organism>
<feature type="chain" id="PRO_0000189597" description="L-seryl-tRNA(Sec) selenium transferase">
    <location>
        <begin position="1"/>
        <end position="465"/>
    </location>
</feature>
<feature type="modified residue" description="N6-(pyridoxal phosphate)lysine" evidence="1">
    <location>
        <position position="294"/>
    </location>
</feature>
<reference key="1">
    <citation type="journal article" date="1998" name="Eur. J. Biochem.">
        <title>Bacterial selenocysteine synthase -- structural and functional properties.</title>
        <authorList>
            <person name="Tormay P."/>
            <person name="Wilting R."/>
            <person name="Lottspeich F."/>
            <person name="Mehta P.K."/>
            <person name="Christen P."/>
            <person name="Boeck A."/>
        </authorList>
    </citation>
    <scope>NUCLEOTIDE SEQUENCE [GENOMIC DNA]</scope>
    <scope>FUNCTION</scope>
    <source>
        <strain>DSM 1743</strain>
    </source>
</reference>
<evidence type="ECO:0000250" key="1"/>
<evidence type="ECO:0000269" key="2">
    <source>
    </source>
</evidence>
<evidence type="ECO:0000305" key="3"/>
<sequence>MSSLFRHIPSVDRFLQDLEQDRALADLPRQMLKDLVAEFLDLCREEIRAGVVTDESALAFTTLAARAGAYVRTRSRPHFRRVVNATGVVIHTNLGRSILAEEAVLAVAEGCRHYSNLEMDLDTGQRGSRYSHVEKLLCRLTGAEAGLVVNNNAAAVLLVLDTLAKGREVVVSRGQLVEIGGSFRIPEVMKKSGAVLREVGATNRTHLRDYAEAIGPDTAMLMKVHTSNYRIIGFHKEVDLPDLVALGRERGLSTFEDLGSGNLFDFSPYGFMPEPTVQQVLRSGVDVVTFSGDKLLGGPQAGVIVGRREFIERIKKNQLNRALRIDKMTLAALEATLRLYLDPEQARRTVPTLAMITAAPKELHARAGRLRRRLSRDLAGLASVAVKPGFSRVGGGSFPEQDLSTTLVSVAPTGMDVDSLRQGLLAEDIPVVGRVEDGAFCLDPRTLMDAEFALVAGAMKAVLAR</sequence>
<dbReference type="EC" id="2.9.1.1"/>
<dbReference type="EMBL" id="Y14815">
    <property type="protein sequence ID" value="CAA75098.1"/>
    <property type="molecule type" value="Genomic_DNA"/>
</dbReference>
<dbReference type="SMR" id="P56372"/>
<dbReference type="UniPathway" id="UPA00906">
    <property type="reaction ID" value="UER00896"/>
</dbReference>
<dbReference type="GO" id="GO:0005737">
    <property type="term" value="C:cytoplasm"/>
    <property type="evidence" value="ECO:0007669"/>
    <property type="project" value="UniProtKB-SubCell"/>
</dbReference>
<dbReference type="GO" id="GO:0004125">
    <property type="term" value="F:L-seryl-tRNA(Sec) selenium transferase activity"/>
    <property type="evidence" value="ECO:0007669"/>
    <property type="project" value="UniProtKB-UniRule"/>
</dbReference>
<dbReference type="GO" id="GO:0001717">
    <property type="term" value="P:conversion of seryl-tRNAsec to selenocys-tRNAsec"/>
    <property type="evidence" value="ECO:0007669"/>
    <property type="project" value="UniProtKB-UniRule"/>
</dbReference>
<dbReference type="GO" id="GO:0001514">
    <property type="term" value="P:selenocysteine incorporation"/>
    <property type="evidence" value="ECO:0007669"/>
    <property type="project" value="UniProtKB-UniRule"/>
</dbReference>
<dbReference type="Gene3D" id="3.90.1150.180">
    <property type="match status" value="1"/>
</dbReference>
<dbReference type="Gene3D" id="3.40.640.10">
    <property type="entry name" value="Type I PLP-dependent aspartate aminotransferase-like (Major domain)"/>
    <property type="match status" value="1"/>
</dbReference>
<dbReference type="HAMAP" id="MF_00423">
    <property type="entry name" value="SelA"/>
    <property type="match status" value="1"/>
</dbReference>
<dbReference type="InterPro" id="IPR015424">
    <property type="entry name" value="PyrdxlP-dep_Trfase"/>
</dbReference>
<dbReference type="InterPro" id="IPR015421">
    <property type="entry name" value="PyrdxlP-dep_Trfase_major"/>
</dbReference>
<dbReference type="InterPro" id="IPR018319">
    <property type="entry name" value="SelA-like"/>
</dbReference>
<dbReference type="InterPro" id="IPR004534">
    <property type="entry name" value="SelA_trans"/>
</dbReference>
<dbReference type="InterPro" id="IPR025862">
    <property type="entry name" value="SelA_trans_N_dom"/>
</dbReference>
<dbReference type="NCBIfam" id="TIGR00474">
    <property type="entry name" value="selA"/>
    <property type="match status" value="1"/>
</dbReference>
<dbReference type="PANTHER" id="PTHR32328">
    <property type="entry name" value="L-SERYL-TRNA(SEC) SELENIUM TRANSFERASE"/>
    <property type="match status" value="1"/>
</dbReference>
<dbReference type="PANTHER" id="PTHR32328:SF0">
    <property type="entry name" value="L-SERYL-TRNA(SEC) SELENIUM TRANSFERASE"/>
    <property type="match status" value="1"/>
</dbReference>
<dbReference type="Pfam" id="PF12390">
    <property type="entry name" value="Se-cys_synth_N"/>
    <property type="match status" value="1"/>
</dbReference>
<dbReference type="Pfam" id="PF03841">
    <property type="entry name" value="SelA"/>
    <property type="match status" value="1"/>
</dbReference>
<dbReference type="SUPFAM" id="SSF53383">
    <property type="entry name" value="PLP-dependent transferases"/>
    <property type="match status" value="1"/>
</dbReference>
<keyword id="KW-0963">Cytoplasm</keyword>
<keyword id="KW-0648">Protein biosynthesis</keyword>
<keyword id="KW-0663">Pyridoxal phosphate</keyword>
<keyword id="KW-0711">Selenium</keyword>
<keyword id="KW-0808">Transferase</keyword>
<accession>P56372</accession>
<proteinExistence type="inferred from homology"/>
<gene>
    <name type="primary">selA</name>
</gene>
<name>SELA_DESBA</name>
<comment type="function">
    <text evidence="2">Converts seryl-tRNA(Sec) to selenocysteinyl-tRNA(Sec) required for selenoprotein biosynthesis.</text>
</comment>
<comment type="catalytic activity">
    <reaction>
        <text>L-seryl-tRNA(Sec) + selenophosphate + H(+) = L-selenocysteinyl-tRNA(Sec) + phosphate</text>
        <dbReference type="Rhea" id="RHEA:22728"/>
        <dbReference type="Rhea" id="RHEA-COMP:9742"/>
        <dbReference type="Rhea" id="RHEA-COMP:9743"/>
        <dbReference type="ChEBI" id="CHEBI:15378"/>
        <dbReference type="ChEBI" id="CHEBI:16144"/>
        <dbReference type="ChEBI" id="CHEBI:43474"/>
        <dbReference type="ChEBI" id="CHEBI:78533"/>
        <dbReference type="ChEBI" id="CHEBI:78573"/>
        <dbReference type="EC" id="2.9.1.1"/>
    </reaction>
</comment>
<comment type="cofactor">
    <cofactor evidence="1">
        <name>pyridoxal 5'-phosphate</name>
        <dbReference type="ChEBI" id="CHEBI:597326"/>
    </cofactor>
</comment>
<comment type="pathway">
    <text>Aminoacyl-tRNA biosynthesis; selenocysteinyl-tRNA(Sec) biosynthesis; selenocysteinyl-tRNA(Sec) from L-seryl-tRNA(Sec) (bacterial route): step 1/1.</text>
</comment>
<comment type="subcellular location">
    <subcellularLocation>
        <location evidence="1">Cytoplasm</location>
    </subcellularLocation>
</comment>
<comment type="similarity">
    <text evidence="3">Belongs to the SelA family.</text>
</comment>
<protein>
    <recommendedName>
        <fullName>L-seryl-tRNA(Sec) selenium transferase</fullName>
        <ecNumber>2.9.1.1</ecNumber>
    </recommendedName>
    <alternativeName>
        <fullName>Selenocysteine synthase</fullName>
        <shortName>Sec synthase</shortName>
    </alternativeName>
    <alternativeName>
        <fullName>Selenocysteinyl-tRNA(Sec) synthase</fullName>
    </alternativeName>
</protein>